<evidence type="ECO:0000255" key="1">
    <source>
        <dbReference type="HAMAP-Rule" id="MF_00500"/>
    </source>
</evidence>
<evidence type="ECO:0000256" key="2">
    <source>
        <dbReference type="SAM" id="MobiDB-lite"/>
    </source>
</evidence>
<evidence type="ECO:0000305" key="3"/>
<gene>
    <name evidence="1" type="primary">rpsT</name>
    <name type="ordered locus">XCC1152</name>
</gene>
<feature type="chain" id="PRO_0000168064" description="Small ribosomal subunit protein bS20">
    <location>
        <begin position="1"/>
        <end position="89"/>
    </location>
</feature>
<feature type="region of interest" description="Disordered" evidence="2">
    <location>
        <begin position="1"/>
        <end position="24"/>
    </location>
</feature>
<feature type="compositionally biased region" description="Basic residues" evidence="2">
    <location>
        <begin position="1"/>
        <end position="12"/>
    </location>
</feature>
<reference key="1">
    <citation type="journal article" date="2002" name="Nature">
        <title>Comparison of the genomes of two Xanthomonas pathogens with differing host specificities.</title>
        <authorList>
            <person name="da Silva A.C.R."/>
            <person name="Ferro J.A."/>
            <person name="Reinach F.C."/>
            <person name="Farah C.S."/>
            <person name="Furlan L.R."/>
            <person name="Quaggio R.B."/>
            <person name="Monteiro-Vitorello C.B."/>
            <person name="Van Sluys M.A."/>
            <person name="Almeida N.F. Jr."/>
            <person name="Alves L.M.C."/>
            <person name="do Amaral A.M."/>
            <person name="Bertolini M.C."/>
            <person name="Camargo L.E.A."/>
            <person name="Camarotte G."/>
            <person name="Cannavan F."/>
            <person name="Cardozo J."/>
            <person name="Chambergo F."/>
            <person name="Ciapina L.P."/>
            <person name="Cicarelli R.M.B."/>
            <person name="Coutinho L.L."/>
            <person name="Cursino-Santos J.R."/>
            <person name="El-Dorry H."/>
            <person name="Faria J.B."/>
            <person name="Ferreira A.J.S."/>
            <person name="Ferreira R.C.C."/>
            <person name="Ferro M.I.T."/>
            <person name="Formighieri E.F."/>
            <person name="Franco M.C."/>
            <person name="Greggio C.C."/>
            <person name="Gruber A."/>
            <person name="Katsuyama A.M."/>
            <person name="Kishi L.T."/>
            <person name="Leite R.P."/>
            <person name="Lemos E.G.M."/>
            <person name="Lemos M.V.F."/>
            <person name="Locali E.C."/>
            <person name="Machado M.A."/>
            <person name="Madeira A.M.B.N."/>
            <person name="Martinez-Rossi N.M."/>
            <person name="Martins E.C."/>
            <person name="Meidanis J."/>
            <person name="Menck C.F.M."/>
            <person name="Miyaki C.Y."/>
            <person name="Moon D.H."/>
            <person name="Moreira L.M."/>
            <person name="Novo M.T.M."/>
            <person name="Okura V.K."/>
            <person name="Oliveira M.C."/>
            <person name="Oliveira V.R."/>
            <person name="Pereira H.A."/>
            <person name="Rossi A."/>
            <person name="Sena J.A.D."/>
            <person name="Silva C."/>
            <person name="de Souza R.F."/>
            <person name="Spinola L.A.F."/>
            <person name="Takita M.A."/>
            <person name="Tamura R.E."/>
            <person name="Teixeira E.C."/>
            <person name="Tezza R.I.D."/>
            <person name="Trindade dos Santos M."/>
            <person name="Truffi D."/>
            <person name="Tsai S.M."/>
            <person name="White F.F."/>
            <person name="Setubal J.C."/>
            <person name="Kitajima J.P."/>
        </authorList>
    </citation>
    <scope>NUCLEOTIDE SEQUENCE [LARGE SCALE GENOMIC DNA]</scope>
    <source>
        <strain>ATCC 33913 / DSM 3586 / NCPPB 528 / LMG 568 / P 25</strain>
    </source>
</reference>
<sequence length="89" mass="9690">MANIKSAKKRAKQTVVRNERNTGQRSMLRTAVKKVIKALDANDAAGAEAAFAVAQPILDRFSARGLIHKNKAARHKSRLTARIKAIKAA</sequence>
<organism>
    <name type="scientific">Xanthomonas campestris pv. campestris (strain ATCC 33913 / DSM 3586 / NCPPB 528 / LMG 568 / P 25)</name>
    <dbReference type="NCBI Taxonomy" id="190485"/>
    <lineage>
        <taxon>Bacteria</taxon>
        <taxon>Pseudomonadati</taxon>
        <taxon>Pseudomonadota</taxon>
        <taxon>Gammaproteobacteria</taxon>
        <taxon>Lysobacterales</taxon>
        <taxon>Lysobacteraceae</taxon>
        <taxon>Xanthomonas</taxon>
    </lineage>
</organism>
<dbReference type="EMBL" id="AE008922">
    <property type="protein sequence ID" value="AAM40451.1"/>
    <property type="molecule type" value="Genomic_DNA"/>
</dbReference>
<dbReference type="RefSeq" id="NP_636527.1">
    <property type="nucleotide sequence ID" value="NC_003902.1"/>
</dbReference>
<dbReference type="RefSeq" id="WP_002807888.1">
    <property type="nucleotide sequence ID" value="NC_003902.1"/>
</dbReference>
<dbReference type="SMR" id="Q8PBG9"/>
<dbReference type="STRING" id="190485.XCC1152"/>
<dbReference type="EnsemblBacteria" id="AAM40451">
    <property type="protein sequence ID" value="AAM40451"/>
    <property type="gene ID" value="XCC1152"/>
</dbReference>
<dbReference type="GeneID" id="95583594"/>
<dbReference type="KEGG" id="xcc:XCC1152"/>
<dbReference type="PATRIC" id="fig|190485.4.peg.1232"/>
<dbReference type="eggNOG" id="COG0268">
    <property type="taxonomic scope" value="Bacteria"/>
</dbReference>
<dbReference type="HOGENOM" id="CLU_160655_4_0_6"/>
<dbReference type="OrthoDB" id="9807974at2"/>
<dbReference type="Proteomes" id="UP000001010">
    <property type="component" value="Chromosome"/>
</dbReference>
<dbReference type="GO" id="GO:0005829">
    <property type="term" value="C:cytosol"/>
    <property type="evidence" value="ECO:0000318"/>
    <property type="project" value="GO_Central"/>
</dbReference>
<dbReference type="GO" id="GO:0015935">
    <property type="term" value="C:small ribosomal subunit"/>
    <property type="evidence" value="ECO:0000318"/>
    <property type="project" value="GO_Central"/>
</dbReference>
<dbReference type="GO" id="GO:0070181">
    <property type="term" value="F:small ribosomal subunit rRNA binding"/>
    <property type="evidence" value="ECO:0000318"/>
    <property type="project" value="GO_Central"/>
</dbReference>
<dbReference type="GO" id="GO:0003735">
    <property type="term" value="F:structural constituent of ribosome"/>
    <property type="evidence" value="ECO:0007669"/>
    <property type="project" value="InterPro"/>
</dbReference>
<dbReference type="GO" id="GO:0006412">
    <property type="term" value="P:translation"/>
    <property type="evidence" value="ECO:0007669"/>
    <property type="project" value="UniProtKB-UniRule"/>
</dbReference>
<dbReference type="FunFam" id="1.20.58.110:FF:000001">
    <property type="entry name" value="30S ribosomal protein S20"/>
    <property type="match status" value="1"/>
</dbReference>
<dbReference type="Gene3D" id="1.20.58.110">
    <property type="entry name" value="Ribosomal protein S20"/>
    <property type="match status" value="1"/>
</dbReference>
<dbReference type="HAMAP" id="MF_00500">
    <property type="entry name" value="Ribosomal_bS20"/>
    <property type="match status" value="1"/>
</dbReference>
<dbReference type="InterPro" id="IPR002583">
    <property type="entry name" value="Ribosomal_bS20"/>
</dbReference>
<dbReference type="InterPro" id="IPR036510">
    <property type="entry name" value="Ribosomal_bS20_sf"/>
</dbReference>
<dbReference type="NCBIfam" id="TIGR00029">
    <property type="entry name" value="S20"/>
    <property type="match status" value="1"/>
</dbReference>
<dbReference type="PANTHER" id="PTHR33398">
    <property type="entry name" value="30S RIBOSOMAL PROTEIN S20"/>
    <property type="match status" value="1"/>
</dbReference>
<dbReference type="PANTHER" id="PTHR33398:SF1">
    <property type="entry name" value="SMALL RIBOSOMAL SUBUNIT PROTEIN BS20C"/>
    <property type="match status" value="1"/>
</dbReference>
<dbReference type="Pfam" id="PF01649">
    <property type="entry name" value="Ribosomal_S20p"/>
    <property type="match status" value="1"/>
</dbReference>
<dbReference type="SUPFAM" id="SSF46992">
    <property type="entry name" value="Ribosomal protein S20"/>
    <property type="match status" value="1"/>
</dbReference>
<name>RS20_XANCP</name>
<comment type="function">
    <text evidence="1">Binds directly to 16S ribosomal RNA.</text>
</comment>
<comment type="similarity">
    <text evidence="1">Belongs to the bacterial ribosomal protein bS20 family.</text>
</comment>
<accession>Q8PBG9</accession>
<keyword id="KW-1185">Reference proteome</keyword>
<keyword id="KW-0687">Ribonucleoprotein</keyword>
<keyword id="KW-0689">Ribosomal protein</keyword>
<keyword id="KW-0694">RNA-binding</keyword>
<keyword id="KW-0699">rRNA-binding</keyword>
<protein>
    <recommendedName>
        <fullName evidence="1">Small ribosomal subunit protein bS20</fullName>
    </recommendedName>
    <alternativeName>
        <fullName evidence="3">30S ribosomal protein S20</fullName>
    </alternativeName>
</protein>
<proteinExistence type="inferred from homology"/>